<dbReference type="EMBL" id="AY578154">
    <property type="protein sequence ID" value="AAS91554.1"/>
    <property type="molecule type" value="mRNA"/>
</dbReference>
<dbReference type="EMBL" id="AY769337">
    <property type="protein sequence ID" value="AAV34879.1"/>
    <property type="molecule type" value="mRNA"/>
</dbReference>
<dbReference type="RefSeq" id="NP_001037207.1">
    <property type="nucleotide sequence ID" value="NM_001043742.1"/>
</dbReference>
<dbReference type="SMR" id="Q6PUF8"/>
<dbReference type="FunCoup" id="Q6PUF8">
    <property type="interactions" value="1207"/>
</dbReference>
<dbReference type="STRING" id="7091.Q6PUF8"/>
<dbReference type="PaxDb" id="7091-BGIBMGA001363-TA"/>
<dbReference type="EnsemblMetazoa" id="NM_001043742.1">
    <property type="protein sequence ID" value="NP_001037207.1"/>
    <property type="gene ID" value="GeneID_692689"/>
</dbReference>
<dbReference type="GeneID" id="692689"/>
<dbReference type="KEGG" id="bmor:692689"/>
<dbReference type="CTD" id="6227"/>
<dbReference type="eggNOG" id="KOG3486">
    <property type="taxonomic scope" value="Eukaryota"/>
</dbReference>
<dbReference type="HOGENOM" id="CLU_167122_2_0_1"/>
<dbReference type="InParanoid" id="Q6PUF8"/>
<dbReference type="OrthoDB" id="122818at7088"/>
<dbReference type="Proteomes" id="UP000005204">
    <property type="component" value="Unassembled WGS sequence"/>
</dbReference>
<dbReference type="GO" id="GO:0005829">
    <property type="term" value="C:cytosol"/>
    <property type="evidence" value="ECO:0007669"/>
    <property type="project" value="UniProtKB-SubCell"/>
</dbReference>
<dbReference type="GO" id="GO:1990904">
    <property type="term" value="C:ribonucleoprotein complex"/>
    <property type="evidence" value="ECO:0007669"/>
    <property type="project" value="UniProtKB-KW"/>
</dbReference>
<dbReference type="GO" id="GO:0005840">
    <property type="term" value="C:ribosome"/>
    <property type="evidence" value="ECO:0007669"/>
    <property type="project" value="UniProtKB-KW"/>
</dbReference>
<dbReference type="GO" id="GO:0005791">
    <property type="term" value="C:rough endoplasmic reticulum"/>
    <property type="evidence" value="ECO:0007669"/>
    <property type="project" value="UniProtKB-SubCell"/>
</dbReference>
<dbReference type="GO" id="GO:0003735">
    <property type="term" value="F:structural constituent of ribosome"/>
    <property type="evidence" value="ECO:0007669"/>
    <property type="project" value="InterPro"/>
</dbReference>
<dbReference type="GO" id="GO:0006412">
    <property type="term" value="P:translation"/>
    <property type="evidence" value="ECO:0007669"/>
    <property type="project" value="InterPro"/>
</dbReference>
<dbReference type="FunFam" id="3.30.1230.20:FF:000001">
    <property type="entry name" value="40S ribosomal protein S21"/>
    <property type="match status" value="1"/>
</dbReference>
<dbReference type="Gene3D" id="3.30.1230.20">
    <property type="match status" value="1"/>
</dbReference>
<dbReference type="InterPro" id="IPR001931">
    <property type="entry name" value="Ribosomal_eS21"/>
</dbReference>
<dbReference type="InterPro" id="IPR018279">
    <property type="entry name" value="Ribosomal_eS21_CS"/>
</dbReference>
<dbReference type="InterPro" id="IPR038579">
    <property type="entry name" value="Ribosomal_eS21_sf"/>
</dbReference>
<dbReference type="PANTHER" id="PTHR10442">
    <property type="entry name" value="40S RIBOSOMAL PROTEIN S21"/>
    <property type="match status" value="1"/>
</dbReference>
<dbReference type="Pfam" id="PF01249">
    <property type="entry name" value="Ribosomal_S21e"/>
    <property type="match status" value="1"/>
</dbReference>
<dbReference type="PIRSF" id="PIRSF002148">
    <property type="entry name" value="Ribosomal_S21e"/>
    <property type="match status" value="1"/>
</dbReference>
<dbReference type="PROSITE" id="PS00996">
    <property type="entry name" value="RIBOSOMAL_S21E"/>
    <property type="match status" value="1"/>
</dbReference>
<protein>
    <recommendedName>
        <fullName evidence="4">Small ribosomal subunit protein eS21</fullName>
    </recommendedName>
    <alternativeName>
        <fullName>40S ribosomal protein S21</fullName>
    </alternativeName>
</protein>
<proteinExistence type="inferred from homology"/>
<reference key="1">
    <citation type="submission" date="2004-03" db="EMBL/GenBank/DDBJ databases">
        <title>Full-length ribosomal protein sequence from an EST library of Bombyx mori.</title>
        <authorList>
            <person name="Hong S.M."/>
            <person name="Kang S.W."/>
            <person name="Goo T.W."/>
            <person name="Eum J.H."/>
            <person name="Nho S.K."/>
        </authorList>
    </citation>
    <scope>NUCLEOTIDE SEQUENCE [MRNA]</scope>
</reference>
<reference key="2">
    <citation type="submission" date="2004-09" db="EMBL/GenBank/DDBJ databases">
        <title>Ribosomal proteins of Bombyx mori.</title>
        <authorList>
            <person name="Heckel D.G."/>
            <person name="Morgan M."/>
            <person name="Shimada T."/>
            <person name="Mita K."/>
        </authorList>
    </citation>
    <scope>NUCLEOTIDE SEQUENCE [MRNA]</scope>
    <source>
        <strain>C108</strain>
    </source>
</reference>
<sequence length="83" mass="9088">MQNDAGEFVDLYCPRKCSASNRLIHAKDHASVQLVIADVDPATGRAADTSKMYVVCGAIRRMGESDDCIVRLTKKDGILAKNY</sequence>
<comment type="subunit">
    <text evidence="1">Component of the 40S small ribosomal subunit.</text>
</comment>
<comment type="subcellular location">
    <subcellularLocation>
        <location evidence="2">Cytoplasm</location>
        <location evidence="2">Cytosol</location>
    </subcellularLocation>
    <subcellularLocation>
        <location evidence="2">Cytoplasm</location>
    </subcellularLocation>
    <subcellularLocation>
        <location evidence="3">Rough endoplasmic reticulum</location>
    </subcellularLocation>
    <text evidence="2 3">Detected on cytosolic polysomes (By similarity). Detected in ribosomes that are associated with the rough endoplasmic reticulum (By similarity).</text>
</comment>
<comment type="similarity">
    <text evidence="4">Belongs to the eukaryotic ribosomal protein eS21 family.</text>
</comment>
<keyword id="KW-0963">Cytoplasm</keyword>
<keyword id="KW-0256">Endoplasmic reticulum</keyword>
<keyword id="KW-1185">Reference proteome</keyword>
<keyword id="KW-0687">Ribonucleoprotein</keyword>
<keyword id="KW-0689">Ribosomal protein</keyword>
<organism>
    <name type="scientific">Bombyx mori</name>
    <name type="common">Silk moth</name>
    <dbReference type="NCBI Taxonomy" id="7091"/>
    <lineage>
        <taxon>Eukaryota</taxon>
        <taxon>Metazoa</taxon>
        <taxon>Ecdysozoa</taxon>
        <taxon>Arthropoda</taxon>
        <taxon>Hexapoda</taxon>
        <taxon>Insecta</taxon>
        <taxon>Pterygota</taxon>
        <taxon>Neoptera</taxon>
        <taxon>Endopterygota</taxon>
        <taxon>Lepidoptera</taxon>
        <taxon>Glossata</taxon>
        <taxon>Ditrysia</taxon>
        <taxon>Bombycoidea</taxon>
        <taxon>Bombycidae</taxon>
        <taxon>Bombycinae</taxon>
        <taxon>Bombyx</taxon>
    </lineage>
</organism>
<evidence type="ECO:0000250" key="1">
    <source>
        <dbReference type="UniProtKB" id="O76927"/>
    </source>
</evidence>
<evidence type="ECO:0000250" key="2">
    <source>
        <dbReference type="UniProtKB" id="P63220"/>
    </source>
</evidence>
<evidence type="ECO:0000250" key="3">
    <source>
        <dbReference type="UniProtKB" id="P63221"/>
    </source>
</evidence>
<evidence type="ECO:0000305" key="4"/>
<name>RS21_BOMMO</name>
<feature type="chain" id="PRO_0000194741" description="Small ribosomal subunit protein eS21">
    <location>
        <begin position="1"/>
        <end position="83"/>
    </location>
</feature>
<gene>
    <name type="primary">RpS21</name>
</gene>
<accession>Q6PUF8</accession>